<organism>
    <name type="scientific">Homo sapiens</name>
    <name type="common">Human</name>
    <dbReference type="NCBI Taxonomy" id="9606"/>
    <lineage>
        <taxon>Eukaryota</taxon>
        <taxon>Metazoa</taxon>
        <taxon>Chordata</taxon>
        <taxon>Craniata</taxon>
        <taxon>Vertebrata</taxon>
        <taxon>Euteleostomi</taxon>
        <taxon>Mammalia</taxon>
        <taxon>Eutheria</taxon>
        <taxon>Euarchontoglires</taxon>
        <taxon>Primates</taxon>
        <taxon>Haplorrhini</taxon>
        <taxon>Catarrhini</taxon>
        <taxon>Hominidae</taxon>
        <taxon>Homo</taxon>
    </lineage>
</organism>
<reference key="1">
    <citation type="journal article" date="2006" name="Nature">
        <title>DNA sequence of human chromosome 17 and analysis of rearrangement in the human lineage.</title>
        <authorList>
            <person name="Zody M.C."/>
            <person name="Garber M."/>
            <person name="Adams D.J."/>
            <person name="Sharpe T."/>
            <person name="Harrow J."/>
            <person name="Lupski J.R."/>
            <person name="Nicholson C."/>
            <person name="Searle S.M."/>
            <person name="Wilming L."/>
            <person name="Young S.K."/>
            <person name="Abouelleil A."/>
            <person name="Allen N.R."/>
            <person name="Bi W."/>
            <person name="Bloom T."/>
            <person name="Borowsky M.L."/>
            <person name="Bugalter B.E."/>
            <person name="Butler J."/>
            <person name="Chang J.L."/>
            <person name="Chen C.-K."/>
            <person name="Cook A."/>
            <person name="Corum B."/>
            <person name="Cuomo C.A."/>
            <person name="de Jong P.J."/>
            <person name="DeCaprio D."/>
            <person name="Dewar K."/>
            <person name="FitzGerald M."/>
            <person name="Gilbert J."/>
            <person name="Gibson R."/>
            <person name="Gnerre S."/>
            <person name="Goldstein S."/>
            <person name="Grafham D.V."/>
            <person name="Grocock R."/>
            <person name="Hafez N."/>
            <person name="Hagopian D.S."/>
            <person name="Hart E."/>
            <person name="Norman C.H."/>
            <person name="Humphray S."/>
            <person name="Jaffe D.B."/>
            <person name="Jones M."/>
            <person name="Kamal M."/>
            <person name="Khodiyar V.K."/>
            <person name="LaButti K."/>
            <person name="Laird G."/>
            <person name="Lehoczky J."/>
            <person name="Liu X."/>
            <person name="Lokyitsang T."/>
            <person name="Loveland J."/>
            <person name="Lui A."/>
            <person name="Macdonald P."/>
            <person name="Major J.E."/>
            <person name="Matthews L."/>
            <person name="Mauceli E."/>
            <person name="McCarroll S.A."/>
            <person name="Mihalev A.H."/>
            <person name="Mudge J."/>
            <person name="Nguyen C."/>
            <person name="Nicol R."/>
            <person name="O'Leary S.B."/>
            <person name="Osoegawa K."/>
            <person name="Schwartz D.C."/>
            <person name="Shaw-Smith C."/>
            <person name="Stankiewicz P."/>
            <person name="Steward C."/>
            <person name="Swarbreck D."/>
            <person name="Venkataraman V."/>
            <person name="Whittaker C.A."/>
            <person name="Yang X."/>
            <person name="Zimmer A.R."/>
            <person name="Bradley A."/>
            <person name="Hubbard T."/>
            <person name="Birren B.W."/>
            <person name="Rogers J."/>
            <person name="Lander E.S."/>
            <person name="Nusbaum C."/>
        </authorList>
    </citation>
    <scope>NUCLEOTIDE SEQUENCE [LARGE SCALE GENOMIC DNA]</scope>
</reference>
<proteinExistence type="inferred from homology"/>
<gene>
    <name evidence="3" type="primary">GSG1L2</name>
</gene>
<evidence type="ECO:0000255" key="1"/>
<evidence type="ECO:0000305" key="2"/>
<evidence type="ECO:0000312" key="3">
    <source>
        <dbReference type="HGNC" id="HGNC:51826"/>
    </source>
</evidence>
<protein>
    <recommendedName>
        <fullName evidence="2">Germ cell-specific gene 1-like protein 2</fullName>
        <shortName evidence="2">GSG1-like protein 2</shortName>
    </recommendedName>
</protein>
<sequence length="293" mass="32443">MDRAKQQQALLLLPVCLALTFSLTAVVSSHWCEGTRRVVKPLCQDQPGGQHCIHFKRDNSSNGRMDNNSQAVLYIWELGDDKFIQRGFHVGLWQSCEESLNGEDEKCRSFRSVVPAEEQGVLWLSIGGEVLDIVLILTSAILLGSRVSCRSPGFHWLRVDALVAIFMVLAGLLGMVAHMMYTTIFQITVNLGPEDWKPQTWDYGWSYCLAWGSFALCLAVSVSAMSRFTAARLEFTEKQQAQNGSRHSQHSFLEPEASESIWKTGAAPCPAEQAFRNVSGHLPPGAPGKVSIC</sequence>
<keyword id="KW-0325">Glycoprotein</keyword>
<keyword id="KW-0472">Membrane</keyword>
<keyword id="KW-1185">Reference proteome</keyword>
<keyword id="KW-0812">Transmembrane</keyword>
<keyword id="KW-1133">Transmembrane helix</keyword>
<feature type="chain" id="PRO_0000343701" description="Germ cell-specific gene 1-like protein 2">
    <location>
        <begin position="1"/>
        <end position="293"/>
    </location>
</feature>
<feature type="topological domain" description="Cytoplasmic" evidence="2">
    <location>
        <begin position="1"/>
        <end position="8"/>
    </location>
</feature>
<feature type="transmembrane region" description="Helical" evidence="1">
    <location>
        <begin position="9"/>
        <end position="29"/>
    </location>
</feature>
<feature type="topological domain" description="Extracellular" evidence="2">
    <location>
        <begin position="30"/>
        <end position="120"/>
    </location>
</feature>
<feature type="transmembrane region" description="Helical" evidence="1">
    <location>
        <begin position="121"/>
        <end position="141"/>
    </location>
</feature>
<feature type="topological domain" description="Cytoplasmic" evidence="2">
    <location>
        <begin position="142"/>
        <end position="160"/>
    </location>
</feature>
<feature type="transmembrane region" description="Helical" evidence="1">
    <location>
        <begin position="161"/>
        <end position="181"/>
    </location>
</feature>
<feature type="topological domain" description="Extracellular" evidence="2">
    <location>
        <begin position="182"/>
        <end position="204"/>
    </location>
</feature>
<feature type="transmembrane region" description="Helical" evidence="1">
    <location>
        <begin position="205"/>
        <end position="225"/>
    </location>
</feature>
<feature type="topological domain" description="Cytoplasmic" evidence="2">
    <location>
        <begin position="226"/>
        <end position="293"/>
    </location>
</feature>
<feature type="glycosylation site" description="N-linked (GlcNAc...) asparagine" evidence="1">
    <location>
        <position position="59"/>
    </location>
</feature>
<feature type="glycosylation site" description="N-linked (GlcNAc...) asparagine" evidence="1">
    <location>
        <position position="67"/>
    </location>
</feature>
<accession>A8MUP6</accession>
<accession>K7EL98</accession>
<name>GS1L2_HUMAN</name>
<dbReference type="EMBL" id="AC026591">
    <property type="status" value="NOT_ANNOTATED_CDS"/>
    <property type="molecule type" value="Genomic_DNA"/>
</dbReference>
<dbReference type="EMBL" id="AC027045">
    <property type="status" value="NOT_ANNOTATED_CDS"/>
    <property type="molecule type" value="Genomic_DNA"/>
</dbReference>
<dbReference type="CCDS" id="CCDS82072.1"/>
<dbReference type="RefSeq" id="NP_001297148.1">
    <property type="nucleotide sequence ID" value="NM_001310219.2"/>
</dbReference>
<dbReference type="SMR" id="A8MUP6"/>
<dbReference type="FunCoup" id="A8MUP6">
    <property type="interactions" value="30"/>
</dbReference>
<dbReference type="STRING" id="9606.ENSP00000465978"/>
<dbReference type="GlyCosmos" id="A8MUP6">
    <property type="glycosylation" value="2 sites, No reported glycans"/>
</dbReference>
<dbReference type="GlyGen" id="A8MUP6">
    <property type="glycosylation" value="2 sites"/>
</dbReference>
<dbReference type="BioMuta" id="GSG1L2"/>
<dbReference type="PaxDb" id="9606-ENSP00000465978"/>
<dbReference type="PeptideAtlas" id="A8MUP6"/>
<dbReference type="Antibodypedia" id="71262">
    <property type="antibodies" value="3 antibodies from 3 providers"/>
</dbReference>
<dbReference type="DNASU" id="644070"/>
<dbReference type="Ensembl" id="ENST00000399363.5">
    <property type="protein sequence ID" value="ENSP00000465978.1"/>
    <property type="gene ID" value="ENSG00000214978.8"/>
</dbReference>
<dbReference type="GeneID" id="644070"/>
<dbReference type="KEGG" id="hsa:644070"/>
<dbReference type="MANE-Select" id="ENST00000399363.5">
    <property type="protein sequence ID" value="ENSP00000465978.1"/>
    <property type="RefSeq nucleotide sequence ID" value="NM_001310219.2"/>
    <property type="RefSeq protein sequence ID" value="NP_001297148.1"/>
</dbReference>
<dbReference type="UCSC" id="uc060bew.1">
    <property type="organism name" value="human"/>
</dbReference>
<dbReference type="AGR" id="HGNC:51826"/>
<dbReference type="CTD" id="644070"/>
<dbReference type="DisGeNET" id="644070"/>
<dbReference type="GeneCards" id="GSG1L2"/>
<dbReference type="HGNC" id="HGNC:51826">
    <property type="gene designation" value="GSG1L2"/>
</dbReference>
<dbReference type="HPA" id="ENSG00000214978">
    <property type="expression patterns" value="Not detected"/>
</dbReference>
<dbReference type="neXtProt" id="NX_A8MUP6"/>
<dbReference type="OpenTargets" id="ENSG00000214978"/>
<dbReference type="VEuPathDB" id="HostDB:ENSG00000214978"/>
<dbReference type="eggNOG" id="ENOG502QVKM">
    <property type="taxonomic scope" value="Eukaryota"/>
</dbReference>
<dbReference type="GeneTree" id="ENSGT01050000244814"/>
<dbReference type="InParanoid" id="A8MUP6"/>
<dbReference type="OMA" id="PGGQHCI"/>
<dbReference type="OrthoDB" id="10001768at2759"/>
<dbReference type="PAN-GO" id="A8MUP6">
    <property type="GO annotations" value="1 GO annotation based on evolutionary models"/>
</dbReference>
<dbReference type="PhylomeDB" id="A8MUP6"/>
<dbReference type="TreeFam" id="TF331388"/>
<dbReference type="BioGRID-ORCS" id="644070">
    <property type="hits" value="1 hit in 24 CRISPR screens"/>
</dbReference>
<dbReference type="GenomeRNAi" id="644070"/>
<dbReference type="Pharos" id="A8MUP6">
    <property type="development level" value="Tdark"/>
</dbReference>
<dbReference type="PRO" id="PR:A8MUP6"/>
<dbReference type="Proteomes" id="UP000005640">
    <property type="component" value="Chromosome 17"/>
</dbReference>
<dbReference type="RNAct" id="A8MUP6">
    <property type="molecule type" value="protein"/>
</dbReference>
<dbReference type="Bgee" id="ENSG00000214978">
    <property type="expression patterns" value="Expressed in male germ line stem cell (sensu Vertebrata) in testis and 11 other cell types or tissues"/>
</dbReference>
<dbReference type="GO" id="GO:0005886">
    <property type="term" value="C:plasma membrane"/>
    <property type="evidence" value="ECO:0000318"/>
    <property type="project" value="GO_Central"/>
</dbReference>
<dbReference type="FunFam" id="1.20.140.150:FF:000037">
    <property type="entry name" value="GSG1 like 2"/>
    <property type="match status" value="1"/>
</dbReference>
<dbReference type="Gene3D" id="1.20.140.150">
    <property type="match status" value="1"/>
</dbReference>
<dbReference type="InterPro" id="IPR012478">
    <property type="entry name" value="GSG-1"/>
</dbReference>
<dbReference type="InterPro" id="IPR050579">
    <property type="entry name" value="PMP-22/EMP/MP20-like"/>
</dbReference>
<dbReference type="PANTHER" id="PTHR10671">
    <property type="entry name" value="EPITHELIAL MEMBRANE PROTEIN-RELATED"/>
    <property type="match status" value="1"/>
</dbReference>
<dbReference type="PANTHER" id="PTHR10671:SF40">
    <property type="entry name" value="GERM CELL-SPECIFIC GENE 1-LIKE PROTEIN 2"/>
    <property type="match status" value="1"/>
</dbReference>
<dbReference type="Pfam" id="PF07803">
    <property type="entry name" value="GSG-1"/>
    <property type="match status" value="1"/>
</dbReference>
<comment type="subcellular location">
    <subcellularLocation>
        <location evidence="1">Membrane</location>
        <topology evidence="1">Multi-pass membrane protein</topology>
    </subcellularLocation>
</comment>
<comment type="similarity">
    <text evidence="2">Belongs to the GSG1 family.</text>
</comment>